<evidence type="ECO:0000250" key="1"/>
<evidence type="ECO:0000256" key="2">
    <source>
        <dbReference type="SAM" id="MobiDB-lite"/>
    </source>
</evidence>
<evidence type="ECO:0000305" key="3"/>
<dbReference type="EC" id="2.1.1.-"/>
<dbReference type="EMBL" id="L28115">
    <property type="protein sequence ID" value="AAA21687.1"/>
    <property type="molecule type" value="Genomic_DNA"/>
</dbReference>
<dbReference type="PIR" id="T47231">
    <property type="entry name" value="T47231"/>
</dbReference>
<dbReference type="RefSeq" id="XP_001708536.1">
    <property type="nucleotide sequence ID" value="XM_001708484.1"/>
</dbReference>
<dbReference type="SMR" id="Q24957"/>
<dbReference type="GeneID" id="5701450"/>
<dbReference type="KEGG" id="gla:GL50803_0097219"/>
<dbReference type="VEuPathDB" id="GiardiaDB:DHA2_97219"/>
<dbReference type="VEuPathDB" id="GiardiaDB:GL50581_3741"/>
<dbReference type="VEuPathDB" id="GiardiaDB:GL50803_0097219"/>
<dbReference type="VEuPathDB" id="GiardiaDB:QR46_1572"/>
<dbReference type="eggNOG" id="KOG1596">
    <property type="taxonomic scope" value="Eukaryota"/>
</dbReference>
<dbReference type="OrthoDB" id="1859733at2759"/>
<dbReference type="GO" id="GO:0031428">
    <property type="term" value="C:box C/D methylation guide snoRNP complex"/>
    <property type="evidence" value="ECO:0007669"/>
    <property type="project" value="TreeGrafter"/>
</dbReference>
<dbReference type="GO" id="GO:0005730">
    <property type="term" value="C:nucleolus"/>
    <property type="evidence" value="ECO:0007669"/>
    <property type="project" value="UniProtKB-SubCell"/>
</dbReference>
<dbReference type="GO" id="GO:0032040">
    <property type="term" value="C:small-subunit processome"/>
    <property type="evidence" value="ECO:0007669"/>
    <property type="project" value="TreeGrafter"/>
</dbReference>
<dbReference type="GO" id="GO:1990259">
    <property type="term" value="F:histone H2AQ104 methyltransferase activity"/>
    <property type="evidence" value="ECO:0007669"/>
    <property type="project" value="TreeGrafter"/>
</dbReference>
<dbReference type="GO" id="GO:0003723">
    <property type="term" value="F:RNA binding"/>
    <property type="evidence" value="ECO:0007669"/>
    <property type="project" value="UniProtKB-KW"/>
</dbReference>
<dbReference type="GO" id="GO:0008649">
    <property type="term" value="F:rRNA methyltransferase activity"/>
    <property type="evidence" value="ECO:0007669"/>
    <property type="project" value="TreeGrafter"/>
</dbReference>
<dbReference type="GO" id="GO:0000494">
    <property type="term" value="P:box C/D sno(s)RNA 3'-end processing"/>
    <property type="evidence" value="ECO:0007669"/>
    <property type="project" value="TreeGrafter"/>
</dbReference>
<dbReference type="FunFam" id="3.30.200.20:FF:000386">
    <property type="entry name" value="Fibrillarin, putative"/>
    <property type="match status" value="1"/>
</dbReference>
<dbReference type="Gene3D" id="3.30.200.20">
    <property type="entry name" value="Phosphorylase Kinase, domain 1"/>
    <property type="match status" value="1"/>
</dbReference>
<dbReference type="Gene3D" id="3.40.50.150">
    <property type="entry name" value="Vaccinia Virus protein VP39"/>
    <property type="match status" value="1"/>
</dbReference>
<dbReference type="HAMAP" id="MF_00351">
    <property type="entry name" value="RNA_methyltransf_FlpA"/>
    <property type="match status" value="1"/>
</dbReference>
<dbReference type="InterPro" id="IPR000692">
    <property type="entry name" value="Fibrillarin"/>
</dbReference>
<dbReference type="InterPro" id="IPR020813">
    <property type="entry name" value="Fibrillarin_CS"/>
</dbReference>
<dbReference type="InterPro" id="IPR029063">
    <property type="entry name" value="SAM-dependent_MTases_sf"/>
</dbReference>
<dbReference type="NCBIfam" id="NF003276">
    <property type="entry name" value="PRK04266.1-2"/>
    <property type="match status" value="1"/>
</dbReference>
<dbReference type="PANTHER" id="PTHR10335:SF17">
    <property type="entry name" value="FIBRILLARIN"/>
    <property type="match status" value="1"/>
</dbReference>
<dbReference type="PANTHER" id="PTHR10335">
    <property type="entry name" value="RRNA 2-O-METHYLTRANSFERASE FIBRILLARIN"/>
    <property type="match status" value="1"/>
</dbReference>
<dbReference type="Pfam" id="PF01269">
    <property type="entry name" value="Fibrillarin"/>
    <property type="match status" value="1"/>
</dbReference>
<dbReference type="PRINTS" id="PR00052">
    <property type="entry name" value="FIBRILLARIN"/>
</dbReference>
<dbReference type="SMART" id="SM01206">
    <property type="entry name" value="Fibrillarin"/>
    <property type="match status" value="1"/>
</dbReference>
<dbReference type="SUPFAM" id="SSF53335">
    <property type="entry name" value="S-adenosyl-L-methionine-dependent methyltransferases"/>
    <property type="match status" value="1"/>
</dbReference>
<dbReference type="PROSITE" id="PS00566">
    <property type="entry name" value="FIBRILLARIN"/>
    <property type="match status" value="1"/>
</dbReference>
<keyword id="KW-0488">Methylation</keyword>
<keyword id="KW-0489">Methyltransferase</keyword>
<keyword id="KW-0539">Nucleus</keyword>
<keyword id="KW-0687">Ribonucleoprotein</keyword>
<keyword id="KW-0694">RNA-binding</keyword>
<keyword id="KW-0698">rRNA processing</keyword>
<keyword id="KW-0949">S-adenosyl-L-methionine</keyword>
<keyword id="KW-0808">Transferase</keyword>
<comment type="function">
    <text evidence="1">S-adenosyl-L-methionine-dependent methyltransferase that has the ability to methylate both RNAs and proteins. Involved in pre-rRNA processing. Utilizes the methyl donor S-adenosyl-L-methionine to catalyze the site-specific 2'-hydroxyl methylation of ribose moieties in pre-ribosomal RNA. Site specificity is provided by a guide RNA that base pairs with the substrate. Methylation occurs at a characteristic distance from the sequence involved in base pairing with the guide RNA. Also acts as a protein methyltransferase by mediating methylation of 'Gln-105' of histone H2A (H2AQ105me), a modification that impairs binding of the FACT complex and is specifically present at 35S ribosomal DNA locus (By similarity).</text>
</comment>
<comment type="catalytic activity">
    <reaction>
        <text>L-glutaminyl-[histone H2A] + S-adenosyl-L-methionine = N(5)-methyl-L-glutaminyl-[histone H2A] + S-adenosyl-L-homocysteine + H(+)</text>
        <dbReference type="Rhea" id="RHEA:50904"/>
        <dbReference type="Rhea" id="RHEA-COMP:12837"/>
        <dbReference type="Rhea" id="RHEA-COMP:12839"/>
        <dbReference type="ChEBI" id="CHEBI:15378"/>
        <dbReference type="ChEBI" id="CHEBI:30011"/>
        <dbReference type="ChEBI" id="CHEBI:57856"/>
        <dbReference type="ChEBI" id="CHEBI:59789"/>
        <dbReference type="ChEBI" id="CHEBI:61891"/>
    </reaction>
</comment>
<comment type="subunit">
    <text evidence="1">Component of box C/D small nucleolar ribonucleoprotein (snoRNP) particles. It is associated with the U3, U8 and U13 small nuclear RNAs.</text>
</comment>
<comment type="subcellular location">
    <subcellularLocation>
        <location evidence="1">Nucleus</location>
        <location evidence="1">Nucleolus</location>
    </subcellularLocation>
    <text evidence="1">Fibrillar region of the nucleolus.</text>
</comment>
<comment type="PTM">
    <text>By homology to other fibrillarins, some or all of the N-terminal domain arginines are modified to asymmetric dimethylarginine (DMA).</text>
</comment>
<comment type="similarity">
    <text evidence="3">Belongs to the methyltransferase superfamily. Fibrillarin family.</text>
</comment>
<feature type="chain" id="PRO_0000148514" description="rRNA 2'-O-methyltransferase fibrillarin">
    <location>
        <begin position="1"/>
        <end position="327"/>
    </location>
</feature>
<feature type="region of interest" description="Disordered" evidence="2">
    <location>
        <begin position="1"/>
        <end position="96"/>
    </location>
</feature>
<feature type="compositionally biased region" description="Basic and acidic residues" evidence="2">
    <location>
        <begin position="22"/>
        <end position="56"/>
    </location>
</feature>
<feature type="compositionally biased region" description="Gly residues" evidence="2">
    <location>
        <begin position="73"/>
        <end position="90"/>
    </location>
</feature>
<feature type="binding site" evidence="1">
    <location>
        <begin position="181"/>
        <end position="182"/>
    </location>
    <ligand>
        <name>S-adenosyl-L-methionine</name>
        <dbReference type="ChEBI" id="CHEBI:59789"/>
    </ligand>
</feature>
<feature type="binding site" evidence="1">
    <location>
        <begin position="200"/>
        <end position="201"/>
    </location>
    <ligand>
        <name>S-adenosyl-L-methionine</name>
        <dbReference type="ChEBI" id="CHEBI:59789"/>
    </ligand>
</feature>
<feature type="binding site" evidence="1">
    <location>
        <begin position="225"/>
        <end position="226"/>
    </location>
    <ligand>
        <name>S-adenosyl-L-methionine</name>
        <dbReference type="ChEBI" id="CHEBI:59789"/>
    </ligand>
</feature>
<feature type="binding site" evidence="1">
    <location>
        <begin position="245"/>
        <end position="248"/>
    </location>
    <ligand>
        <name>S-adenosyl-L-methionine</name>
        <dbReference type="ChEBI" id="CHEBI:59789"/>
    </ligand>
</feature>
<feature type="modified residue" description="Asymmetric dimethylarginine" evidence="1">
    <location>
        <position position="10"/>
    </location>
</feature>
<feature type="modified residue" description="Asymmetric dimethylarginine" evidence="1">
    <location>
        <position position="19"/>
    </location>
</feature>
<feature type="modified residue" description="Asymmetric dimethylarginine" evidence="1">
    <location>
        <position position="44"/>
    </location>
</feature>
<feature type="modified residue" description="Asymmetric dimethylarginine" evidence="1">
    <location>
        <position position="49"/>
    </location>
</feature>
<feature type="modified residue" description="Asymmetric dimethylarginine" evidence="1">
    <location>
        <position position="55"/>
    </location>
</feature>
<feature type="modified residue" description="Asymmetric dimethylarginine" evidence="1">
    <location>
        <position position="65"/>
    </location>
</feature>
<feature type="modified residue" description="Asymmetric dimethylarginine" evidence="1">
    <location>
        <position position="69"/>
    </location>
</feature>
<feature type="modified residue" description="Asymmetric dimethylarginine" evidence="1">
    <location>
        <position position="78"/>
    </location>
</feature>
<protein>
    <recommendedName>
        <fullName>rRNA 2'-O-methyltransferase fibrillarin</fullName>
        <ecNumber>2.1.1.-</ecNumber>
    </recommendedName>
    <alternativeName>
        <fullName>Histone-glutamine methyltransferase</fullName>
    </alternativeName>
</protein>
<sequence>MGTDYRNSGRGGRDGPGGRGPGNDRRDSGRSFGDRRPERPDFKRGDGGRGFGDRRGSGPPGGPDRGDRRGPRDGPGGRGGPGGPGGGFKGGAKTMVKPHPKYDGIFISHGRGDVLVTKSLAPGVAVYGEKRISVEGTESKIEYREWNPFRSKLGAAVRLNVLDMPIKPGAKVLYLGAASGTTVSHVSDIVGPTGAVYAVEFSQRSGRDLLEVAKARTNVYPIIADARHPYKYRMIVPEVDCIFSDVAQPDQARIVAENARYYLKANGGMLISIKASSVDSTLKPEAVFAREIETLREHDFKCKEQLDIGEFHRNHAIVVGRFRVKAA</sequence>
<proteinExistence type="inferred from homology"/>
<accession>Q24957</accession>
<name>FBRL_GIAIN</name>
<reference key="1">
    <citation type="journal article" date="1998" name="J. Eukaryot. Microbiol.">
        <title>Fibrillarin, a conserved pre-ribosomal RNA processing protein of Giardia.</title>
        <authorList>
            <person name="Narcisi E.M."/>
            <person name="Glover C.V. III"/>
            <person name="Fechheimer M."/>
        </authorList>
    </citation>
    <scope>NUCLEOTIDE SEQUENCE [GENOMIC DNA]</scope>
    <source>
        <strain>ATCC 30957 / WB</strain>
    </source>
</reference>
<organism>
    <name type="scientific">Giardia intestinalis</name>
    <name type="common">Giardia lamblia</name>
    <dbReference type="NCBI Taxonomy" id="5741"/>
    <lineage>
        <taxon>Eukaryota</taxon>
        <taxon>Metamonada</taxon>
        <taxon>Diplomonadida</taxon>
        <taxon>Hexamitidae</taxon>
        <taxon>Giardiinae</taxon>
        <taxon>Giardia</taxon>
    </lineage>
</organism>